<reference key="1">
    <citation type="journal article" date="2000" name="Nature">
        <title>DNA sequence of both chromosomes of the cholera pathogen Vibrio cholerae.</title>
        <authorList>
            <person name="Heidelberg J.F."/>
            <person name="Eisen J.A."/>
            <person name="Nelson W.C."/>
            <person name="Clayton R.A."/>
            <person name="Gwinn M.L."/>
            <person name="Dodson R.J."/>
            <person name="Haft D.H."/>
            <person name="Hickey E.K."/>
            <person name="Peterson J.D."/>
            <person name="Umayam L.A."/>
            <person name="Gill S.R."/>
            <person name="Nelson K.E."/>
            <person name="Read T.D."/>
            <person name="Tettelin H."/>
            <person name="Richardson D.L."/>
            <person name="Ermolaeva M.D."/>
            <person name="Vamathevan J.J."/>
            <person name="Bass S."/>
            <person name="Qin H."/>
            <person name="Dragoi I."/>
            <person name="Sellers P."/>
            <person name="McDonald L.A."/>
            <person name="Utterback T.R."/>
            <person name="Fleischmann R.D."/>
            <person name="Nierman W.C."/>
            <person name="White O."/>
            <person name="Salzberg S.L."/>
            <person name="Smith H.O."/>
            <person name="Colwell R.R."/>
            <person name="Mekalanos J.J."/>
            <person name="Venter J.C."/>
            <person name="Fraser C.M."/>
        </authorList>
    </citation>
    <scope>NUCLEOTIDE SEQUENCE [LARGE SCALE GENOMIC DNA]</scope>
    <source>
        <strain>ATCC 39315 / El Tor Inaba N16961</strain>
    </source>
</reference>
<feature type="chain" id="PRO_0000293173" description="D-erythrose-4-phosphate dehydrogenase">
    <location>
        <begin position="1"/>
        <end position="341"/>
    </location>
</feature>
<feature type="active site" description="Nucleophile" evidence="1">
    <location>
        <position position="159"/>
    </location>
</feature>
<feature type="binding site" evidence="1">
    <location>
        <begin position="11"/>
        <end position="12"/>
    </location>
    <ligand>
        <name>NAD(+)</name>
        <dbReference type="ChEBI" id="CHEBI:57540"/>
    </ligand>
</feature>
<feature type="binding site" evidence="1">
    <location>
        <begin position="158"/>
        <end position="160"/>
    </location>
    <ligand>
        <name>substrate</name>
    </ligand>
</feature>
<feature type="binding site" evidence="1">
    <location>
        <position position="204"/>
    </location>
    <ligand>
        <name>substrate</name>
    </ligand>
</feature>
<feature type="binding site" evidence="1">
    <location>
        <begin position="217"/>
        <end position="218"/>
    </location>
    <ligand>
        <name>substrate</name>
    </ligand>
</feature>
<feature type="binding site" evidence="1">
    <location>
        <position position="240"/>
    </location>
    <ligand>
        <name>substrate</name>
    </ligand>
</feature>
<feature type="binding site" evidence="1">
    <location>
        <position position="322"/>
    </location>
    <ligand>
        <name>NAD(+)</name>
        <dbReference type="ChEBI" id="CHEBI:57540"/>
    </ligand>
</feature>
<feature type="site" description="Activates thiol group during catalysis" evidence="1">
    <location>
        <position position="186"/>
    </location>
</feature>
<dbReference type="EC" id="1.2.1.72" evidence="1"/>
<dbReference type="EMBL" id="AE003852">
    <property type="protein sequence ID" value="AAF93649.1"/>
    <property type="status" value="ALT_INIT"/>
    <property type="molecule type" value="Genomic_DNA"/>
</dbReference>
<dbReference type="PIR" id="E82317">
    <property type="entry name" value="E82317"/>
</dbReference>
<dbReference type="RefSeq" id="NP_230130.2">
    <property type="nucleotide sequence ID" value="NC_002505.1"/>
</dbReference>
<dbReference type="RefSeq" id="WP_000946626.1">
    <property type="nucleotide sequence ID" value="NZ_LT906614.1"/>
</dbReference>
<dbReference type="SMR" id="P0C6C2"/>
<dbReference type="STRING" id="243277.VC_0476"/>
<dbReference type="DNASU" id="2615270"/>
<dbReference type="EnsemblBacteria" id="AAF93649">
    <property type="protein sequence ID" value="AAF93649"/>
    <property type="gene ID" value="VC_0476"/>
</dbReference>
<dbReference type="GeneID" id="69720756"/>
<dbReference type="KEGG" id="vch:VC_0476"/>
<dbReference type="PATRIC" id="fig|243277.26.peg.450"/>
<dbReference type="eggNOG" id="COG0057">
    <property type="taxonomic scope" value="Bacteria"/>
</dbReference>
<dbReference type="HOGENOM" id="CLU_030140_0_2_6"/>
<dbReference type="UniPathway" id="UPA00244">
    <property type="reaction ID" value="UER00309"/>
</dbReference>
<dbReference type="Proteomes" id="UP000000584">
    <property type="component" value="Chromosome 1"/>
</dbReference>
<dbReference type="GO" id="GO:0005829">
    <property type="term" value="C:cytosol"/>
    <property type="evidence" value="ECO:0000318"/>
    <property type="project" value="GO_Central"/>
</dbReference>
<dbReference type="GO" id="GO:0048001">
    <property type="term" value="F:erythrose-4-phosphate dehydrogenase activity"/>
    <property type="evidence" value="ECO:0007669"/>
    <property type="project" value="UniProtKB-UniRule"/>
</dbReference>
<dbReference type="GO" id="GO:0004365">
    <property type="term" value="F:glyceraldehyde-3-phosphate dehydrogenase (NAD+) (phosphorylating) activity"/>
    <property type="evidence" value="ECO:0000318"/>
    <property type="project" value="GO_Central"/>
</dbReference>
<dbReference type="GO" id="GO:0051287">
    <property type="term" value="F:NAD binding"/>
    <property type="evidence" value="ECO:0000318"/>
    <property type="project" value="GO_Central"/>
</dbReference>
<dbReference type="GO" id="GO:0006006">
    <property type="term" value="P:glucose metabolic process"/>
    <property type="evidence" value="ECO:0000318"/>
    <property type="project" value="GO_Central"/>
</dbReference>
<dbReference type="GO" id="GO:0042823">
    <property type="term" value="P:pyridoxal phosphate biosynthetic process"/>
    <property type="evidence" value="ECO:0007669"/>
    <property type="project" value="UniProtKB-UniRule"/>
</dbReference>
<dbReference type="GO" id="GO:0008615">
    <property type="term" value="P:pyridoxine biosynthetic process"/>
    <property type="evidence" value="ECO:0007669"/>
    <property type="project" value="UniProtKB-UniRule"/>
</dbReference>
<dbReference type="CDD" id="cd23937">
    <property type="entry name" value="GAPDH_C_E4PDH"/>
    <property type="match status" value="1"/>
</dbReference>
<dbReference type="FunFam" id="3.30.360.10:FF:000007">
    <property type="entry name" value="D-erythrose-4-phosphate dehydrogenase"/>
    <property type="match status" value="1"/>
</dbReference>
<dbReference type="FunFam" id="3.40.50.720:FF:000001">
    <property type="entry name" value="Glyceraldehyde-3-phosphate dehydrogenase"/>
    <property type="match status" value="1"/>
</dbReference>
<dbReference type="Gene3D" id="3.30.360.10">
    <property type="entry name" value="Dihydrodipicolinate Reductase, domain 2"/>
    <property type="match status" value="1"/>
</dbReference>
<dbReference type="Gene3D" id="3.40.50.720">
    <property type="entry name" value="NAD(P)-binding Rossmann-like Domain"/>
    <property type="match status" value="1"/>
</dbReference>
<dbReference type="HAMAP" id="MF_01640">
    <property type="entry name" value="E4P_dehydrog"/>
    <property type="match status" value="1"/>
</dbReference>
<dbReference type="InterPro" id="IPR006422">
    <property type="entry name" value="E4P_DH_bac"/>
</dbReference>
<dbReference type="InterPro" id="IPR020831">
    <property type="entry name" value="GlycerAld/Erythrose_P_DH"/>
</dbReference>
<dbReference type="InterPro" id="IPR020829">
    <property type="entry name" value="GlycerAld_3-P_DH_cat"/>
</dbReference>
<dbReference type="InterPro" id="IPR020828">
    <property type="entry name" value="GlycerAld_3-P_DH_NAD(P)-bd"/>
</dbReference>
<dbReference type="InterPro" id="IPR036291">
    <property type="entry name" value="NAD(P)-bd_dom_sf"/>
</dbReference>
<dbReference type="NCBIfam" id="TIGR01532">
    <property type="entry name" value="E4PD_g-proteo"/>
    <property type="match status" value="1"/>
</dbReference>
<dbReference type="NCBIfam" id="NF010058">
    <property type="entry name" value="PRK13535.1"/>
    <property type="match status" value="1"/>
</dbReference>
<dbReference type="PANTHER" id="PTHR43148">
    <property type="entry name" value="GLYCERALDEHYDE-3-PHOSPHATE DEHYDROGENASE 2"/>
    <property type="match status" value="1"/>
</dbReference>
<dbReference type="Pfam" id="PF02800">
    <property type="entry name" value="Gp_dh_C"/>
    <property type="match status" value="1"/>
</dbReference>
<dbReference type="Pfam" id="PF00044">
    <property type="entry name" value="Gp_dh_N"/>
    <property type="match status" value="1"/>
</dbReference>
<dbReference type="PIRSF" id="PIRSF000149">
    <property type="entry name" value="GAP_DH"/>
    <property type="match status" value="1"/>
</dbReference>
<dbReference type="PRINTS" id="PR00078">
    <property type="entry name" value="G3PDHDRGNASE"/>
</dbReference>
<dbReference type="SMART" id="SM00846">
    <property type="entry name" value="Gp_dh_N"/>
    <property type="match status" value="1"/>
</dbReference>
<dbReference type="SUPFAM" id="SSF55347">
    <property type="entry name" value="Glyceraldehyde-3-phosphate dehydrogenase-like, C-terminal domain"/>
    <property type="match status" value="1"/>
</dbReference>
<dbReference type="SUPFAM" id="SSF51735">
    <property type="entry name" value="NAD(P)-binding Rossmann-fold domains"/>
    <property type="match status" value="1"/>
</dbReference>
<keyword id="KW-0963">Cytoplasm</keyword>
<keyword id="KW-0520">NAD</keyword>
<keyword id="KW-0560">Oxidoreductase</keyword>
<keyword id="KW-0664">Pyridoxine biosynthesis</keyword>
<keyword id="KW-1185">Reference proteome</keyword>
<organism>
    <name type="scientific">Vibrio cholerae serotype O1 (strain ATCC 39315 / El Tor Inaba N16961)</name>
    <dbReference type="NCBI Taxonomy" id="243277"/>
    <lineage>
        <taxon>Bacteria</taxon>
        <taxon>Pseudomonadati</taxon>
        <taxon>Pseudomonadota</taxon>
        <taxon>Gammaproteobacteria</taxon>
        <taxon>Vibrionales</taxon>
        <taxon>Vibrionaceae</taxon>
        <taxon>Vibrio</taxon>
    </lineage>
</organism>
<accession>P0C6C2</accession>
<accession>P96153</accession>
<accession>Q9KUN9</accession>
<proteinExistence type="inferred from homology"/>
<protein>
    <recommendedName>
        <fullName evidence="1">D-erythrose-4-phosphate dehydrogenase</fullName>
        <shortName evidence="1">E4PDH</shortName>
        <ecNumber evidence="1">1.2.1.72</ecNumber>
    </recommendedName>
</protein>
<gene>
    <name evidence="1" type="primary">epd</name>
    <name type="ordered locus">VC_0476</name>
</gene>
<sequence>MLRVAINGFGRIGRNVLRAVYESGKRDRIQVVAVNELAKPDAMAHLLQYDTSHGRFGKKISHDQQHIYVHHQNGEYDSIRILHLSEIPLLPWRDLGVDLVLDCTGVYGCQEDGQQHIDAGAKLVLFSHPGASDLDNTIIYGVNHETLTAEHKIVSNGSCTTNCIVPIIKVLDDAFGIDSGTITTIHSSMNDQQVIDAYHNDLRRTRAASQSIIPVDTKLHKGIERIFPKFSNKFEAISVRVPTVNVTAMDLSVTIKSNVKVNDVNQTIVNASQCTLRGIVDYTEAPLVSIDFNHDPHSAIVDGTQTRVSNGQLVKMLVWCDNEWGFANRMLDTALAMQATQ</sequence>
<name>E4PD_VIBCH</name>
<evidence type="ECO:0000255" key="1">
    <source>
        <dbReference type="HAMAP-Rule" id="MF_01640"/>
    </source>
</evidence>
<evidence type="ECO:0000305" key="2"/>
<comment type="function">
    <text evidence="1">Catalyzes the NAD-dependent conversion of D-erythrose 4-phosphate to 4-phosphoerythronate.</text>
</comment>
<comment type="catalytic activity">
    <reaction evidence="1">
        <text>D-erythrose 4-phosphate + NAD(+) + H2O = 4-phospho-D-erythronate + NADH + 2 H(+)</text>
        <dbReference type="Rhea" id="RHEA:12056"/>
        <dbReference type="ChEBI" id="CHEBI:15377"/>
        <dbReference type="ChEBI" id="CHEBI:15378"/>
        <dbReference type="ChEBI" id="CHEBI:16897"/>
        <dbReference type="ChEBI" id="CHEBI:57540"/>
        <dbReference type="ChEBI" id="CHEBI:57945"/>
        <dbReference type="ChEBI" id="CHEBI:58766"/>
        <dbReference type="EC" id="1.2.1.72"/>
    </reaction>
</comment>
<comment type="pathway">
    <text evidence="1">Cofactor biosynthesis; pyridoxine 5'-phosphate biosynthesis; pyridoxine 5'-phosphate from D-erythrose 4-phosphate: step 1/5.</text>
</comment>
<comment type="subunit">
    <text evidence="1">Homotetramer.</text>
</comment>
<comment type="subcellular location">
    <subcellularLocation>
        <location evidence="1">Cytoplasm</location>
    </subcellularLocation>
</comment>
<comment type="similarity">
    <text evidence="1">Belongs to the glyceraldehyde-3-phosphate dehydrogenase family. Epd subfamily.</text>
</comment>
<comment type="sequence caution" evidence="2">
    <conflict type="erroneous initiation">
        <sequence resource="EMBL-CDS" id="AAF93649"/>
    </conflict>
</comment>